<evidence type="ECO:0000255" key="1">
    <source>
        <dbReference type="HAMAP-Rule" id="MF_00740"/>
    </source>
</evidence>
<proteinExistence type="inferred from homology"/>
<sequence>MKRTIIMMLDSFGVGAATDAESFGDVGSDTFGSIAKACAEGRADIGREGPLKLPNLSKLGLALAAKESTGTFAPGFSDDVEVIGAYGHADELSTGKDTPSGHWEMAGVPVLYEWGYFSDLTNSFPKELTDKILARAGLDGYLGNCHASGTAILEELGEEHMRTGKPIFYTSADSVFQIACHEESFGLENLYNLCIIAREELEPYNIGRVIARAFVGTGPSDFARTGNRRDYAVEPPSKTVLDKMKAAGGEVISVGKIADIYANCGITQKVKATGLEALFDATLEQVKAAGDKSIVFTNFVDFDSHYGHRRDIAGYAKALEYFDSRLPEIFEILGEDDLLLLTADHGCDPSWKGTDHTRERVPVLAYGAGLKAGSLGRRNSFADIGQSIASYFKLEPMEYGESFIK</sequence>
<organism>
    <name type="scientific">Shewanella woodyi (strain ATCC 51908 / MS32)</name>
    <dbReference type="NCBI Taxonomy" id="392500"/>
    <lineage>
        <taxon>Bacteria</taxon>
        <taxon>Pseudomonadati</taxon>
        <taxon>Pseudomonadota</taxon>
        <taxon>Gammaproteobacteria</taxon>
        <taxon>Alteromonadales</taxon>
        <taxon>Shewanellaceae</taxon>
        <taxon>Shewanella</taxon>
    </lineage>
</organism>
<comment type="function">
    <text evidence="1">Isomerase that catalyzes the conversion of deoxy-ribose 1-phosphate (dRib-1-P) and ribose 1-phosphate (Rib-1-P) to deoxy-ribose 5-phosphate (dRib-5-P) and ribose 5-phosphate (Rib-5-P), respectively.</text>
</comment>
<comment type="catalytic activity">
    <reaction evidence="1">
        <text>2-deoxy-alpha-D-ribose 1-phosphate = 2-deoxy-D-ribose 5-phosphate</text>
        <dbReference type="Rhea" id="RHEA:27658"/>
        <dbReference type="ChEBI" id="CHEBI:57259"/>
        <dbReference type="ChEBI" id="CHEBI:62877"/>
        <dbReference type="EC" id="5.4.2.7"/>
    </reaction>
</comment>
<comment type="catalytic activity">
    <reaction evidence="1">
        <text>alpha-D-ribose 1-phosphate = D-ribose 5-phosphate</text>
        <dbReference type="Rhea" id="RHEA:18793"/>
        <dbReference type="ChEBI" id="CHEBI:57720"/>
        <dbReference type="ChEBI" id="CHEBI:78346"/>
        <dbReference type="EC" id="5.4.2.7"/>
    </reaction>
</comment>
<comment type="cofactor">
    <cofactor evidence="1">
        <name>Mn(2+)</name>
        <dbReference type="ChEBI" id="CHEBI:29035"/>
    </cofactor>
    <text evidence="1">Binds 2 manganese ions.</text>
</comment>
<comment type="pathway">
    <text evidence="1">Carbohydrate degradation; 2-deoxy-D-ribose 1-phosphate degradation; D-glyceraldehyde 3-phosphate and acetaldehyde from 2-deoxy-alpha-D-ribose 1-phosphate: step 1/2.</text>
</comment>
<comment type="subcellular location">
    <subcellularLocation>
        <location evidence="1">Cytoplasm</location>
    </subcellularLocation>
</comment>
<comment type="similarity">
    <text evidence="1">Belongs to the phosphopentomutase family.</text>
</comment>
<reference key="1">
    <citation type="submission" date="2008-02" db="EMBL/GenBank/DDBJ databases">
        <title>Complete sequence of Shewanella woodyi ATCC 51908.</title>
        <authorList>
            <consortium name="US DOE Joint Genome Institute"/>
            <person name="Copeland A."/>
            <person name="Lucas S."/>
            <person name="Lapidus A."/>
            <person name="Glavina del Rio T."/>
            <person name="Dalin E."/>
            <person name="Tice H."/>
            <person name="Bruce D."/>
            <person name="Goodwin L."/>
            <person name="Pitluck S."/>
            <person name="Sims D."/>
            <person name="Brettin T."/>
            <person name="Detter J.C."/>
            <person name="Han C."/>
            <person name="Kuske C.R."/>
            <person name="Schmutz J."/>
            <person name="Larimer F."/>
            <person name="Land M."/>
            <person name="Hauser L."/>
            <person name="Kyrpides N."/>
            <person name="Lykidis A."/>
            <person name="Zhao J.-S."/>
            <person name="Richardson P."/>
        </authorList>
    </citation>
    <scope>NUCLEOTIDE SEQUENCE [LARGE SCALE GENOMIC DNA]</scope>
    <source>
        <strain>ATCC 51908 / MS32</strain>
    </source>
</reference>
<dbReference type="EC" id="5.4.2.7" evidence="1"/>
<dbReference type="EMBL" id="CP000961">
    <property type="protein sequence ID" value="ACA87811.1"/>
    <property type="molecule type" value="Genomic_DNA"/>
</dbReference>
<dbReference type="RefSeq" id="WP_012326144.1">
    <property type="nucleotide sequence ID" value="NC_010506.1"/>
</dbReference>
<dbReference type="SMR" id="B1KRP6"/>
<dbReference type="STRING" id="392500.Swoo_3547"/>
<dbReference type="KEGG" id="swd:Swoo_3547"/>
<dbReference type="eggNOG" id="COG1015">
    <property type="taxonomic scope" value="Bacteria"/>
</dbReference>
<dbReference type="HOGENOM" id="CLU_053861_0_0_6"/>
<dbReference type="UniPathway" id="UPA00002">
    <property type="reaction ID" value="UER00467"/>
</dbReference>
<dbReference type="Proteomes" id="UP000002168">
    <property type="component" value="Chromosome"/>
</dbReference>
<dbReference type="GO" id="GO:0005829">
    <property type="term" value="C:cytosol"/>
    <property type="evidence" value="ECO:0007669"/>
    <property type="project" value="TreeGrafter"/>
</dbReference>
<dbReference type="GO" id="GO:0000287">
    <property type="term" value="F:magnesium ion binding"/>
    <property type="evidence" value="ECO:0007669"/>
    <property type="project" value="InterPro"/>
</dbReference>
<dbReference type="GO" id="GO:0030145">
    <property type="term" value="F:manganese ion binding"/>
    <property type="evidence" value="ECO:0007669"/>
    <property type="project" value="UniProtKB-UniRule"/>
</dbReference>
<dbReference type="GO" id="GO:0008973">
    <property type="term" value="F:phosphopentomutase activity"/>
    <property type="evidence" value="ECO:0007669"/>
    <property type="project" value="UniProtKB-UniRule"/>
</dbReference>
<dbReference type="GO" id="GO:0006018">
    <property type="term" value="P:2-deoxyribose 1-phosphate catabolic process"/>
    <property type="evidence" value="ECO:0007669"/>
    <property type="project" value="UniProtKB-UniRule"/>
</dbReference>
<dbReference type="GO" id="GO:0006015">
    <property type="term" value="P:5-phosphoribose 1-diphosphate biosynthetic process"/>
    <property type="evidence" value="ECO:0007669"/>
    <property type="project" value="UniProtKB-UniPathway"/>
</dbReference>
<dbReference type="GO" id="GO:0043094">
    <property type="term" value="P:metabolic compound salvage"/>
    <property type="evidence" value="ECO:0007669"/>
    <property type="project" value="InterPro"/>
</dbReference>
<dbReference type="GO" id="GO:0009117">
    <property type="term" value="P:nucleotide metabolic process"/>
    <property type="evidence" value="ECO:0007669"/>
    <property type="project" value="InterPro"/>
</dbReference>
<dbReference type="CDD" id="cd16009">
    <property type="entry name" value="PPM"/>
    <property type="match status" value="1"/>
</dbReference>
<dbReference type="FunFam" id="3.30.70.1250:FF:000001">
    <property type="entry name" value="Phosphopentomutase"/>
    <property type="match status" value="1"/>
</dbReference>
<dbReference type="Gene3D" id="3.40.720.10">
    <property type="entry name" value="Alkaline Phosphatase, subunit A"/>
    <property type="match status" value="1"/>
</dbReference>
<dbReference type="Gene3D" id="3.30.70.1250">
    <property type="entry name" value="Phosphopentomutase"/>
    <property type="match status" value="1"/>
</dbReference>
<dbReference type="HAMAP" id="MF_00740">
    <property type="entry name" value="Phosphopentomut"/>
    <property type="match status" value="1"/>
</dbReference>
<dbReference type="InterPro" id="IPR017850">
    <property type="entry name" value="Alkaline_phosphatase_core_sf"/>
</dbReference>
<dbReference type="InterPro" id="IPR010045">
    <property type="entry name" value="DeoB"/>
</dbReference>
<dbReference type="InterPro" id="IPR006124">
    <property type="entry name" value="Metalloenzyme"/>
</dbReference>
<dbReference type="InterPro" id="IPR024052">
    <property type="entry name" value="Phosphopentomutase_DeoB_cap_sf"/>
</dbReference>
<dbReference type="NCBIfam" id="TIGR01696">
    <property type="entry name" value="deoB"/>
    <property type="match status" value="1"/>
</dbReference>
<dbReference type="NCBIfam" id="NF003766">
    <property type="entry name" value="PRK05362.1"/>
    <property type="match status" value="1"/>
</dbReference>
<dbReference type="PANTHER" id="PTHR21110">
    <property type="entry name" value="PHOSPHOPENTOMUTASE"/>
    <property type="match status" value="1"/>
</dbReference>
<dbReference type="PANTHER" id="PTHR21110:SF0">
    <property type="entry name" value="PHOSPHOPENTOMUTASE"/>
    <property type="match status" value="1"/>
</dbReference>
<dbReference type="Pfam" id="PF01676">
    <property type="entry name" value="Metalloenzyme"/>
    <property type="match status" value="1"/>
</dbReference>
<dbReference type="PIRSF" id="PIRSF001491">
    <property type="entry name" value="Ppentomutase"/>
    <property type="match status" value="1"/>
</dbReference>
<dbReference type="SUPFAM" id="SSF53649">
    <property type="entry name" value="Alkaline phosphatase-like"/>
    <property type="match status" value="1"/>
</dbReference>
<dbReference type="SUPFAM" id="SSF143856">
    <property type="entry name" value="DeoB insert domain-like"/>
    <property type="match status" value="1"/>
</dbReference>
<feature type="chain" id="PRO_1000133100" description="Phosphopentomutase">
    <location>
        <begin position="1"/>
        <end position="405"/>
    </location>
</feature>
<feature type="binding site" evidence="1">
    <location>
        <position position="10"/>
    </location>
    <ligand>
        <name>Mn(2+)</name>
        <dbReference type="ChEBI" id="CHEBI:29035"/>
        <label>1</label>
    </ligand>
</feature>
<feature type="binding site" evidence="1">
    <location>
        <position position="303"/>
    </location>
    <ligand>
        <name>Mn(2+)</name>
        <dbReference type="ChEBI" id="CHEBI:29035"/>
        <label>2</label>
    </ligand>
</feature>
<feature type="binding site" evidence="1">
    <location>
        <position position="308"/>
    </location>
    <ligand>
        <name>Mn(2+)</name>
        <dbReference type="ChEBI" id="CHEBI:29035"/>
        <label>2</label>
    </ligand>
</feature>
<feature type="binding site" evidence="1">
    <location>
        <position position="344"/>
    </location>
    <ligand>
        <name>Mn(2+)</name>
        <dbReference type="ChEBI" id="CHEBI:29035"/>
        <label>1</label>
    </ligand>
</feature>
<feature type="binding site" evidence="1">
    <location>
        <position position="345"/>
    </location>
    <ligand>
        <name>Mn(2+)</name>
        <dbReference type="ChEBI" id="CHEBI:29035"/>
        <label>1</label>
    </ligand>
</feature>
<feature type="binding site" evidence="1">
    <location>
        <position position="356"/>
    </location>
    <ligand>
        <name>Mn(2+)</name>
        <dbReference type="ChEBI" id="CHEBI:29035"/>
        <label>2</label>
    </ligand>
</feature>
<name>DEOB_SHEWM</name>
<protein>
    <recommendedName>
        <fullName evidence="1">Phosphopentomutase</fullName>
        <ecNumber evidence="1">5.4.2.7</ecNumber>
    </recommendedName>
    <alternativeName>
        <fullName evidence="1">Phosphodeoxyribomutase</fullName>
    </alternativeName>
</protein>
<keyword id="KW-0963">Cytoplasm</keyword>
<keyword id="KW-0413">Isomerase</keyword>
<keyword id="KW-0464">Manganese</keyword>
<keyword id="KW-0479">Metal-binding</keyword>
<keyword id="KW-1185">Reference proteome</keyword>
<gene>
    <name evidence="1" type="primary">deoB</name>
    <name type="ordered locus">Swoo_3547</name>
</gene>
<accession>B1KRP6</accession>